<reference key="1">
    <citation type="journal article" date="2001" name="Lancet">
        <title>Whole genome sequencing of meticillin-resistant Staphylococcus aureus.</title>
        <authorList>
            <person name="Kuroda M."/>
            <person name="Ohta T."/>
            <person name="Uchiyama I."/>
            <person name="Baba T."/>
            <person name="Yuzawa H."/>
            <person name="Kobayashi I."/>
            <person name="Cui L."/>
            <person name="Oguchi A."/>
            <person name="Aoki K."/>
            <person name="Nagai Y."/>
            <person name="Lian J.-Q."/>
            <person name="Ito T."/>
            <person name="Kanamori M."/>
            <person name="Matsumaru H."/>
            <person name="Maruyama A."/>
            <person name="Murakami H."/>
            <person name="Hosoyama A."/>
            <person name="Mizutani-Ui Y."/>
            <person name="Takahashi N.K."/>
            <person name="Sawano T."/>
            <person name="Inoue R."/>
            <person name="Kaito C."/>
            <person name="Sekimizu K."/>
            <person name="Hirakawa H."/>
            <person name="Kuhara S."/>
            <person name="Goto S."/>
            <person name="Yabuzaki J."/>
            <person name="Kanehisa M."/>
            <person name="Yamashita A."/>
            <person name="Oshima K."/>
            <person name="Furuya K."/>
            <person name="Yoshino C."/>
            <person name="Shiba T."/>
            <person name="Hattori M."/>
            <person name="Ogasawara N."/>
            <person name="Hayashi H."/>
            <person name="Hiramatsu K."/>
        </authorList>
    </citation>
    <scope>NUCLEOTIDE SEQUENCE [LARGE SCALE GENOMIC DNA]</scope>
    <source>
        <strain>N315</strain>
    </source>
</reference>
<reference key="2">
    <citation type="submission" date="2007-10" db="UniProtKB">
        <title>Shotgun proteomic analysis of total and membrane protein extracts of S. aureus strain N315.</title>
        <authorList>
            <person name="Vaezzadeh A.R."/>
            <person name="Deshusses J."/>
            <person name="Lescuyer P."/>
            <person name="Hochstrasser D.F."/>
        </authorList>
    </citation>
    <scope>IDENTIFICATION BY MASS SPECTROMETRY [LARGE SCALE ANALYSIS]</scope>
    <source>
        <strain>N315</strain>
    </source>
</reference>
<comment type="function">
    <text evidence="1">DNA-dependent RNA polymerase catalyzes the transcription of DNA into RNA using the four ribonucleoside triphosphates as substrates.</text>
</comment>
<comment type="catalytic activity">
    <reaction evidence="1">
        <text>RNA(n) + a ribonucleoside 5'-triphosphate = RNA(n+1) + diphosphate</text>
        <dbReference type="Rhea" id="RHEA:21248"/>
        <dbReference type="Rhea" id="RHEA-COMP:14527"/>
        <dbReference type="Rhea" id="RHEA-COMP:17342"/>
        <dbReference type="ChEBI" id="CHEBI:33019"/>
        <dbReference type="ChEBI" id="CHEBI:61557"/>
        <dbReference type="ChEBI" id="CHEBI:140395"/>
        <dbReference type="EC" id="2.7.7.6"/>
    </reaction>
</comment>
<comment type="subunit">
    <text evidence="1">Homodimer. The RNAP catalytic core consists of 2 alpha, 1 beta, 1 beta' and 1 omega subunit. When a sigma factor is associated with the core the holoenzyme is formed, which can initiate transcription.</text>
</comment>
<comment type="domain">
    <text evidence="1">The N-terminal domain is essential for RNAP assembly and basal transcription, whereas the C-terminal domain is involved in interaction with transcriptional regulators and with upstream promoter elements.</text>
</comment>
<comment type="similarity">
    <text evidence="1">Belongs to the RNA polymerase alpha chain family.</text>
</comment>
<sequence length="314" mass="35012">MIEIEKPRIETIEISEDAKFGKFVVEPLERGYGTTLGNSLRRILLSSLPGAAVKYIEIEGVLHEFSAVDNVVEDVSTIIMNIKQLALKIYSEEDKTLEIDVRDEGEVTASDITHDSDVEILNPELKIATVSKGGHLKIRLVANKGRGYALAEQNNTSDLPIGVIPVDSLYSPVERVNYTVENTRVGQSSDFDKLTLDVWTNGSITPQESVSLAAKIMTEHLNIFVGLTDEAQNAEIMIEKEEDQKEKVLEMSIEELDLSVRSYNCLKRAGINSVQELADKSEADMMKVRNLGRKSLEEVKYKLEDLGLGLRKED</sequence>
<evidence type="ECO:0000255" key="1">
    <source>
        <dbReference type="HAMAP-Rule" id="MF_00059"/>
    </source>
</evidence>
<feature type="chain" id="PRO_0000175381" description="DNA-directed RNA polymerase subunit alpha">
    <location>
        <begin position="1"/>
        <end position="314"/>
    </location>
</feature>
<feature type="region of interest" description="Alpha N-terminal domain (alpha-NTD)" evidence="1">
    <location>
        <begin position="1"/>
        <end position="228"/>
    </location>
</feature>
<feature type="region of interest" description="Alpha C-terminal domain (alpha-CTD)" evidence="1">
    <location>
        <begin position="245"/>
        <end position="314"/>
    </location>
</feature>
<protein>
    <recommendedName>
        <fullName evidence="1">DNA-directed RNA polymerase subunit alpha</fullName>
        <shortName evidence="1">RNAP subunit alpha</shortName>
        <ecNumber evidence="1">2.7.7.6</ecNumber>
    </recommendedName>
    <alternativeName>
        <fullName evidence="1">RNA polymerase subunit alpha</fullName>
    </alternativeName>
    <alternativeName>
        <fullName evidence="1">Transcriptase subunit alpha</fullName>
    </alternativeName>
</protein>
<keyword id="KW-0240">DNA-directed RNA polymerase</keyword>
<keyword id="KW-0548">Nucleotidyltransferase</keyword>
<keyword id="KW-0804">Transcription</keyword>
<keyword id="KW-0808">Transferase</keyword>
<gene>
    <name evidence="1" type="primary">rpoA</name>
    <name type="ordered locus">SA2023</name>
</gene>
<organism>
    <name type="scientific">Staphylococcus aureus (strain N315)</name>
    <dbReference type="NCBI Taxonomy" id="158879"/>
    <lineage>
        <taxon>Bacteria</taxon>
        <taxon>Bacillati</taxon>
        <taxon>Bacillota</taxon>
        <taxon>Bacilli</taxon>
        <taxon>Bacillales</taxon>
        <taxon>Staphylococcaceae</taxon>
        <taxon>Staphylococcus</taxon>
    </lineage>
</organism>
<accession>P66706</accession>
<accession>Q99S45</accession>
<name>RPOA_STAAN</name>
<proteinExistence type="evidence at protein level"/>
<dbReference type="EC" id="2.7.7.6" evidence="1"/>
<dbReference type="EMBL" id="BA000018">
    <property type="protein sequence ID" value="BAB43316.1"/>
    <property type="molecule type" value="Genomic_DNA"/>
</dbReference>
<dbReference type="PIR" id="C90019">
    <property type="entry name" value="C90019"/>
</dbReference>
<dbReference type="RefSeq" id="WP_000569649.1">
    <property type="nucleotide sequence ID" value="NC_002745.2"/>
</dbReference>
<dbReference type="SMR" id="P66706"/>
<dbReference type="BindingDB" id="P66706"/>
<dbReference type="EnsemblBacteria" id="BAB43316">
    <property type="protein sequence ID" value="BAB43316"/>
    <property type="gene ID" value="BAB43316"/>
</dbReference>
<dbReference type="KEGG" id="sau:SA2023"/>
<dbReference type="HOGENOM" id="CLU_053084_0_1_9"/>
<dbReference type="GO" id="GO:0005737">
    <property type="term" value="C:cytoplasm"/>
    <property type="evidence" value="ECO:0007669"/>
    <property type="project" value="UniProtKB-ARBA"/>
</dbReference>
<dbReference type="GO" id="GO:0000428">
    <property type="term" value="C:DNA-directed RNA polymerase complex"/>
    <property type="evidence" value="ECO:0007669"/>
    <property type="project" value="UniProtKB-KW"/>
</dbReference>
<dbReference type="GO" id="GO:0003677">
    <property type="term" value="F:DNA binding"/>
    <property type="evidence" value="ECO:0007669"/>
    <property type="project" value="UniProtKB-UniRule"/>
</dbReference>
<dbReference type="GO" id="GO:0003899">
    <property type="term" value="F:DNA-directed RNA polymerase activity"/>
    <property type="evidence" value="ECO:0007669"/>
    <property type="project" value="UniProtKB-UniRule"/>
</dbReference>
<dbReference type="GO" id="GO:0046983">
    <property type="term" value="F:protein dimerization activity"/>
    <property type="evidence" value="ECO:0007669"/>
    <property type="project" value="InterPro"/>
</dbReference>
<dbReference type="GO" id="GO:0006351">
    <property type="term" value="P:DNA-templated transcription"/>
    <property type="evidence" value="ECO:0007669"/>
    <property type="project" value="UniProtKB-UniRule"/>
</dbReference>
<dbReference type="CDD" id="cd06928">
    <property type="entry name" value="RNAP_alpha_NTD"/>
    <property type="match status" value="1"/>
</dbReference>
<dbReference type="FunFam" id="1.10.150.20:FF:000001">
    <property type="entry name" value="DNA-directed RNA polymerase subunit alpha"/>
    <property type="match status" value="1"/>
</dbReference>
<dbReference type="FunFam" id="2.170.120.12:FF:000001">
    <property type="entry name" value="DNA-directed RNA polymerase subunit alpha"/>
    <property type="match status" value="1"/>
</dbReference>
<dbReference type="Gene3D" id="1.10.150.20">
    <property type="entry name" value="5' to 3' exonuclease, C-terminal subdomain"/>
    <property type="match status" value="1"/>
</dbReference>
<dbReference type="Gene3D" id="2.170.120.12">
    <property type="entry name" value="DNA-directed RNA polymerase, insert domain"/>
    <property type="match status" value="1"/>
</dbReference>
<dbReference type="Gene3D" id="3.30.1360.10">
    <property type="entry name" value="RNA polymerase, RBP11-like subunit"/>
    <property type="match status" value="1"/>
</dbReference>
<dbReference type="HAMAP" id="MF_00059">
    <property type="entry name" value="RNApol_bact_RpoA"/>
    <property type="match status" value="1"/>
</dbReference>
<dbReference type="InterPro" id="IPR011262">
    <property type="entry name" value="DNA-dir_RNA_pol_insert"/>
</dbReference>
<dbReference type="InterPro" id="IPR011263">
    <property type="entry name" value="DNA-dir_RNA_pol_RpoA/D/Rpb3"/>
</dbReference>
<dbReference type="InterPro" id="IPR011773">
    <property type="entry name" value="DNA-dir_RpoA"/>
</dbReference>
<dbReference type="InterPro" id="IPR036603">
    <property type="entry name" value="RBP11-like"/>
</dbReference>
<dbReference type="InterPro" id="IPR011260">
    <property type="entry name" value="RNAP_asu_C"/>
</dbReference>
<dbReference type="InterPro" id="IPR036643">
    <property type="entry name" value="RNApol_insert_sf"/>
</dbReference>
<dbReference type="NCBIfam" id="NF003513">
    <property type="entry name" value="PRK05182.1-2"/>
    <property type="match status" value="1"/>
</dbReference>
<dbReference type="NCBIfam" id="NF003515">
    <property type="entry name" value="PRK05182.2-1"/>
    <property type="match status" value="1"/>
</dbReference>
<dbReference type="NCBIfam" id="NF003519">
    <property type="entry name" value="PRK05182.2-5"/>
    <property type="match status" value="1"/>
</dbReference>
<dbReference type="NCBIfam" id="TIGR02027">
    <property type="entry name" value="rpoA"/>
    <property type="match status" value="1"/>
</dbReference>
<dbReference type="Pfam" id="PF01000">
    <property type="entry name" value="RNA_pol_A_bac"/>
    <property type="match status" value="1"/>
</dbReference>
<dbReference type="Pfam" id="PF03118">
    <property type="entry name" value="RNA_pol_A_CTD"/>
    <property type="match status" value="1"/>
</dbReference>
<dbReference type="Pfam" id="PF01193">
    <property type="entry name" value="RNA_pol_L"/>
    <property type="match status" value="1"/>
</dbReference>
<dbReference type="SMART" id="SM00662">
    <property type="entry name" value="RPOLD"/>
    <property type="match status" value="1"/>
</dbReference>
<dbReference type="SUPFAM" id="SSF47789">
    <property type="entry name" value="C-terminal domain of RNA polymerase alpha subunit"/>
    <property type="match status" value="1"/>
</dbReference>
<dbReference type="SUPFAM" id="SSF56553">
    <property type="entry name" value="Insert subdomain of RNA polymerase alpha subunit"/>
    <property type="match status" value="1"/>
</dbReference>
<dbReference type="SUPFAM" id="SSF55257">
    <property type="entry name" value="RBP11-like subunits of RNA polymerase"/>
    <property type="match status" value="1"/>
</dbReference>